<evidence type="ECO:0000255" key="1">
    <source>
        <dbReference type="HAMAP-Rule" id="MF_00451"/>
    </source>
</evidence>
<accession>A1WXZ4</accession>
<organism>
    <name type="scientific">Halorhodospira halophila (strain DSM 244 / SL1)</name>
    <name type="common">Ectothiorhodospira halophila (strain DSM 244 / SL1)</name>
    <dbReference type="NCBI Taxonomy" id="349124"/>
    <lineage>
        <taxon>Bacteria</taxon>
        <taxon>Pseudomonadati</taxon>
        <taxon>Pseudomonadota</taxon>
        <taxon>Gammaproteobacteria</taxon>
        <taxon>Chromatiales</taxon>
        <taxon>Ectothiorhodospiraceae</taxon>
        <taxon>Halorhodospira</taxon>
    </lineage>
</organism>
<feature type="chain" id="PRO_1000026238" description="Nucleoside diphosphate kinase">
    <location>
        <begin position="1"/>
        <end position="141"/>
    </location>
</feature>
<feature type="active site" description="Pros-phosphohistidine intermediate" evidence="1">
    <location>
        <position position="117"/>
    </location>
</feature>
<feature type="binding site" evidence="1">
    <location>
        <position position="11"/>
    </location>
    <ligand>
        <name>ATP</name>
        <dbReference type="ChEBI" id="CHEBI:30616"/>
    </ligand>
</feature>
<feature type="binding site" evidence="1">
    <location>
        <position position="59"/>
    </location>
    <ligand>
        <name>ATP</name>
        <dbReference type="ChEBI" id="CHEBI:30616"/>
    </ligand>
</feature>
<feature type="binding site" evidence="1">
    <location>
        <position position="87"/>
    </location>
    <ligand>
        <name>ATP</name>
        <dbReference type="ChEBI" id="CHEBI:30616"/>
    </ligand>
</feature>
<feature type="binding site" evidence="1">
    <location>
        <position position="93"/>
    </location>
    <ligand>
        <name>ATP</name>
        <dbReference type="ChEBI" id="CHEBI:30616"/>
    </ligand>
</feature>
<feature type="binding site" evidence="1">
    <location>
        <position position="104"/>
    </location>
    <ligand>
        <name>ATP</name>
        <dbReference type="ChEBI" id="CHEBI:30616"/>
    </ligand>
</feature>
<feature type="binding site" evidence="1">
    <location>
        <position position="114"/>
    </location>
    <ligand>
        <name>ATP</name>
        <dbReference type="ChEBI" id="CHEBI:30616"/>
    </ligand>
</feature>
<protein>
    <recommendedName>
        <fullName evidence="1">Nucleoside diphosphate kinase</fullName>
        <shortName evidence="1">NDK</shortName>
        <shortName evidence="1">NDP kinase</shortName>
        <ecNumber evidence="1">2.7.4.6</ecNumber>
    </recommendedName>
    <alternativeName>
        <fullName evidence="1">Nucleoside-2-P kinase</fullName>
    </alternativeName>
</protein>
<name>NDK_HALHL</name>
<gene>
    <name evidence="1" type="primary">ndk</name>
    <name type="ordered locus">Hhal_1792</name>
</gene>
<comment type="function">
    <text evidence="1">Major role in the synthesis of nucleoside triphosphates other than ATP. The ATP gamma phosphate is transferred to the NDP beta phosphate via a ping-pong mechanism, using a phosphorylated active-site intermediate.</text>
</comment>
<comment type="catalytic activity">
    <reaction evidence="1">
        <text>a 2'-deoxyribonucleoside 5'-diphosphate + ATP = a 2'-deoxyribonucleoside 5'-triphosphate + ADP</text>
        <dbReference type="Rhea" id="RHEA:44640"/>
        <dbReference type="ChEBI" id="CHEBI:30616"/>
        <dbReference type="ChEBI" id="CHEBI:61560"/>
        <dbReference type="ChEBI" id="CHEBI:73316"/>
        <dbReference type="ChEBI" id="CHEBI:456216"/>
        <dbReference type="EC" id="2.7.4.6"/>
    </reaction>
</comment>
<comment type="catalytic activity">
    <reaction evidence="1">
        <text>a ribonucleoside 5'-diphosphate + ATP = a ribonucleoside 5'-triphosphate + ADP</text>
        <dbReference type="Rhea" id="RHEA:18113"/>
        <dbReference type="ChEBI" id="CHEBI:30616"/>
        <dbReference type="ChEBI" id="CHEBI:57930"/>
        <dbReference type="ChEBI" id="CHEBI:61557"/>
        <dbReference type="ChEBI" id="CHEBI:456216"/>
        <dbReference type="EC" id="2.7.4.6"/>
    </reaction>
</comment>
<comment type="cofactor">
    <cofactor evidence="1">
        <name>Mg(2+)</name>
        <dbReference type="ChEBI" id="CHEBI:18420"/>
    </cofactor>
</comment>
<comment type="subunit">
    <text evidence="1">Homotetramer.</text>
</comment>
<comment type="subcellular location">
    <subcellularLocation>
        <location evidence="1">Cytoplasm</location>
    </subcellularLocation>
</comment>
<comment type="similarity">
    <text evidence="1">Belongs to the NDK family.</text>
</comment>
<dbReference type="EC" id="2.7.4.6" evidence="1"/>
<dbReference type="EMBL" id="CP000544">
    <property type="protein sequence ID" value="ABM62556.1"/>
    <property type="molecule type" value="Genomic_DNA"/>
</dbReference>
<dbReference type="RefSeq" id="WP_011814578.1">
    <property type="nucleotide sequence ID" value="NC_008789.1"/>
</dbReference>
<dbReference type="SMR" id="A1WXZ4"/>
<dbReference type="STRING" id="349124.Hhal_1792"/>
<dbReference type="KEGG" id="hha:Hhal_1792"/>
<dbReference type="eggNOG" id="COG0105">
    <property type="taxonomic scope" value="Bacteria"/>
</dbReference>
<dbReference type="HOGENOM" id="CLU_060216_8_1_6"/>
<dbReference type="OrthoDB" id="9801161at2"/>
<dbReference type="Proteomes" id="UP000000647">
    <property type="component" value="Chromosome"/>
</dbReference>
<dbReference type="GO" id="GO:0005737">
    <property type="term" value="C:cytoplasm"/>
    <property type="evidence" value="ECO:0007669"/>
    <property type="project" value="UniProtKB-SubCell"/>
</dbReference>
<dbReference type="GO" id="GO:0005524">
    <property type="term" value="F:ATP binding"/>
    <property type="evidence" value="ECO:0007669"/>
    <property type="project" value="UniProtKB-UniRule"/>
</dbReference>
<dbReference type="GO" id="GO:0046872">
    <property type="term" value="F:metal ion binding"/>
    <property type="evidence" value="ECO:0007669"/>
    <property type="project" value="UniProtKB-KW"/>
</dbReference>
<dbReference type="GO" id="GO:0004550">
    <property type="term" value="F:nucleoside diphosphate kinase activity"/>
    <property type="evidence" value="ECO:0007669"/>
    <property type="project" value="UniProtKB-UniRule"/>
</dbReference>
<dbReference type="GO" id="GO:0006241">
    <property type="term" value="P:CTP biosynthetic process"/>
    <property type="evidence" value="ECO:0007669"/>
    <property type="project" value="UniProtKB-UniRule"/>
</dbReference>
<dbReference type="GO" id="GO:0006183">
    <property type="term" value="P:GTP biosynthetic process"/>
    <property type="evidence" value="ECO:0007669"/>
    <property type="project" value="UniProtKB-UniRule"/>
</dbReference>
<dbReference type="GO" id="GO:0006228">
    <property type="term" value="P:UTP biosynthetic process"/>
    <property type="evidence" value="ECO:0007669"/>
    <property type="project" value="UniProtKB-UniRule"/>
</dbReference>
<dbReference type="CDD" id="cd04413">
    <property type="entry name" value="NDPk_I"/>
    <property type="match status" value="1"/>
</dbReference>
<dbReference type="FunFam" id="3.30.70.141:FF:000001">
    <property type="entry name" value="Nucleoside diphosphate kinase"/>
    <property type="match status" value="1"/>
</dbReference>
<dbReference type="Gene3D" id="3.30.70.141">
    <property type="entry name" value="Nucleoside diphosphate kinase-like domain"/>
    <property type="match status" value="1"/>
</dbReference>
<dbReference type="HAMAP" id="MF_00451">
    <property type="entry name" value="NDP_kinase"/>
    <property type="match status" value="1"/>
</dbReference>
<dbReference type="InterPro" id="IPR034907">
    <property type="entry name" value="NDK-like_dom"/>
</dbReference>
<dbReference type="InterPro" id="IPR036850">
    <property type="entry name" value="NDK-like_dom_sf"/>
</dbReference>
<dbReference type="InterPro" id="IPR001564">
    <property type="entry name" value="Nucleoside_diP_kinase"/>
</dbReference>
<dbReference type="InterPro" id="IPR023005">
    <property type="entry name" value="Nucleoside_diP_kinase_AS"/>
</dbReference>
<dbReference type="NCBIfam" id="NF001908">
    <property type="entry name" value="PRK00668.1"/>
    <property type="match status" value="1"/>
</dbReference>
<dbReference type="PANTHER" id="PTHR46161">
    <property type="entry name" value="NUCLEOSIDE DIPHOSPHATE KINASE"/>
    <property type="match status" value="1"/>
</dbReference>
<dbReference type="PANTHER" id="PTHR46161:SF3">
    <property type="entry name" value="NUCLEOSIDE DIPHOSPHATE KINASE DDB_G0292928-RELATED"/>
    <property type="match status" value="1"/>
</dbReference>
<dbReference type="Pfam" id="PF00334">
    <property type="entry name" value="NDK"/>
    <property type="match status" value="1"/>
</dbReference>
<dbReference type="PRINTS" id="PR01243">
    <property type="entry name" value="NUCDPKINASE"/>
</dbReference>
<dbReference type="SMART" id="SM00562">
    <property type="entry name" value="NDK"/>
    <property type="match status" value="1"/>
</dbReference>
<dbReference type="SUPFAM" id="SSF54919">
    <property type="entry name" value="Nucleoside diphosphate kinase, NDK"/>
    <property type="match status" value="1"/>
</dbReference>
<dbReference type="PROSITE" id="PS00469">
    <property type="entry name" value="NDPK"/>
    <property type="match status" value="1"/>
</dbReference>
<dbReference type="PROSITE" id="PS51374">
    <property type="entry name" value="NDPK_LIKE"/>
    <property type="match status" value="1"/>
</dbReference>
<reference key="1">
    <citation type="submission" date="2006-12" db="EMBL/GenBank/DDBJ databases">
        <title>Complete sequence of Halorhodospira halophila SL1.</title>
        <authorList>
            <consortium name="US DOE Joint Genome Institute"/>
            <person name="Copeland A."/>
            <person name="Lucas S."/>
            <person name="Lapidus A."/>
            <person name="Barry K."/>
            <person name="Detter J.C."/>
            <person name="Glavina del Rio T."/>
            <person name="Hammon N."/>
            <person name="Israni S."/>
            <person name="Dalin E."/>
            <person name="Tice H."/>
            <person name="Pitluck S."/>
            <person name="Saunders E."/>
            <person name="Brettin T."/>
            <person name="Bruce D."/>
            <person name="Han C."/>
            <person name="Tapia R."/>
            <person name="Schmutz J."/>
            <person name="Larimer F."/>
            <person name="Land M."/>
            <person name="Hauser L."/>
            <person name="Kyrpides N."/>
            <person name="Mikhailova N."/>
            <person name="Hoff W."/>
            <person name="Richardson P."/>
        </authorList>
    </citation>
    <scope>NUCLEOTIDE SEQUENCE [LARGE SCALE GENOMIC DNA]</scope>
    <source>
        <strain>DSM 244 / SL1</strain>
    </source>
</reference>
<sequence length="141" mass="15560">MAVERTLSIIKPDAVAQNAIGEILARFERSGLRVVAARMVRLSTEQAESFYAVHKERPFFNDLVGFMTSGPVMVQVLEGEDAIRKNREIMGATNPKEAAAGTLRHDFAESIDANAVHGSDSPETAENEIEFFFKADEICSR</sequence>
<keyword id="KW-0067">ATP-binding</keyword>
<keyword id="KW-0963">Cytoplasm</keyword>
<keyword id="KW-0418">Kinase</keyword>
<keyword id="KW-0460">Magnesium</keyword>
<keyword id="KW-0479">Metal-binding</keyword>
<keyword id="KW-0546">Nucleotide metabolism</keyword>
<keyword id="KW-0547">Nucleotide-binding</keyword>
<keyword id="KW-0597">Phosphoprotein</keyword>
<keyword id="KW-1185">Reference proteome</keyword>
<keyword id="KW-0808">Transferase</keyword>
<proteinExistence type="inferred from homology"/>